<comment type="function">
    <text evidence="1">Required for maturation of urease via the functional incorporation of the urease nickel metallocenter.</text>
</comment>
<comment type="subunit">
    <text evidence="1">UreD, UreF and UreG form a complex that acts as a GTP-hydrolysis-dependent molecular chaperone, activating the urease apoprotein by helping to assemble the nickel containing metallocenter of UreC. The UreE protein probably delivers the nickel.</text>
</comment>
<comment type="subcellular location">
    <subcellularLocation>
        <location evidence="1">Cytoplasm</location>
    </subcellularLocation>
</comment>
<comment type="similarity">
    <text evidence="1">Belongs to the UreD family.</text>
</comment>
<proteinExistence type="inferred from homology"/>
<protein>
    <recommendedName>
        <fullName evidence="1">Urease accessory protein UreD</fullName>
    </recommendedName>
</protein>
<feature type="chain" id="PRO_0000067608" description="Urease accessory protein UreD">
    <location>
        <begin position="1"/>
        <end position="284"/>
    </location>
</feature>
<keyword id="KW-0143">Chaperone</keyword>
<keyword id="KW-0963">Cytoplasm</keyword>
<keyword id="KW-0996">Nickel insertion</keyword>
<gene>
    <name evidence="1" type="primary">ureD</name>
    <name type="ordered locus">BPP3859</name>
</gene>
<dbReference type="EMBL" id="BX640435">
    <property type="protein sequence ID" value="CAE39142.1"/>
    <property type="molecule type" value="Genomic_DNA"/>
</dbReference>
<dbReference type="RefSeq" id="WP_003814832.1">
    <property type="nucleotide sequence ID" value="NC_002928.3"/>
</dbReference>
<dbReference type="SMR" id="P0A4R6"/>
<dbReference type="GeneID" id="69603100"/>
<dbReference type="KEGG" id="bpa:BPP3859"/>
<dbReference type="HOGENOM" id="CLU_056339_0_0_4"/>
<dbReference type="Proteomes" id="UP000001421">
    <property type="component" value="Chromosome"/>
</dbReference>
<dbReference type="GO" id="GO:0005737">
    <property type="term" value="C:cytoplasm"/>
    <property type="evidence" value="ECO:0007669"/>
    <property type="project" value="UniProtKB-SubCell"/>
</dbReference>
<dbReference type="GO" id="GO:0016151">
    <property type="term" value="F:nickel cation binding"/>
    <property type="evidence" value="ECO:0007669"/>
    <property type="project" value="UniProtKB-UniRule"/>
</dbReference>
<dbReference type="HAMAP" id="MF_01384">
    <property type="entry name" value="UreD"/>
    <property type="match status" value="1"/>
</dbReference>
<dbReference type="InterPro" id="IPR002669">
    <property type="entry name" value="UreD"/>
</dbReference>
<dbReference type="PANTHER" id="PTHR33643">
    <property type="entry name" value="UREASE ACCESSORY PROTEIN D"/>
    <property type="match status" value="1"/>
</dbReference>
<dbReference type="PANTHER" id="PTHR33643:SF1">
    <property type="entry name" value="UREASE ACCESSORY PROTEIN D"/>
    <property type="match status" value="1"/>
</dbReference>
<dbReference type="Pfam" id="PF01774">
    <property type="entry name" value="UreD"/>
    <property type="match status" value="1"/>
</dbReference>
<evidence type="ECO:0000255" key="1">
    <source>
        <dbReference type="HAMAP-Rule" id="MF_01384"/>
    </source>
</evidence>
<organism>
    <name type="scientific">Bordetella parapertussis (strain 12822 / ATCC BAA-587 / NCTC 13253)</name>
    <dbReference type="NCBI Taxonomy" id="257311"/>
    <lineage>
        <taxon>Bacteria</taxon>
        <taxon>Pseudomonadati</taxon>
        <taxon>Pseudomonadota</taxon>
        <taxon>Betaproteobacteria</taxon>
        <taxon>Burkholderiales</taxon>
        <taxon>Alcaligenaceae</taxon>
        <taxon>Bordetella</taxon>
    </lineage>
</organism>
<accession>P0A4R6</accession>
<accession>O06704</accession>
<name>URED_BORPA</name>
<reference key="1">
    <citation type="journal article" date="2003" name="Nat. Genet.">
        <title>Comparative analysis of the genome sequences of Bordetella pertussis, Bordetella parapertussis and Bordetella bronchiseptica.</title>
        <authorList>
            <person name="Parkhill J."/>
            <person name="Sebaihia M."/>
            <person name="Preston A."/>
            <person name="Murphy L.D."/>
            <person name="Thomson N.R."/>
            <person name="Harris D.E."/>
            <person name="Holden M.T.G."/>
            <person name="Churcher C.M."/>
            <person name="Bentley S.D."/>
            <person name="Mungall K.L."/>
            <person name="Cerdeno-Tarraga A.-M."/>
            <person name="Temple L."/>
            <person name="James K.D."/>
            <person name="Harris B."/>
            <person name="Quail M.A."/>
            <person name="Achtman M."/>
            <person name="Atkin R."/>
            <person name="Baker S."/>
            <person name="Basham D."/>
            <person name="Bason N."/>
            <person name="Cherevach I."/>
            <person name="Chillingworth T."/>
            <person name="Collins M."/>
            <person name="Cronin A."/>
            <person name="Davis P."/>
            <person name="Doggett J."/>
            <person name="Feltwell T."/>
            <person name="Goble A."/>
            <person name="Hamlin N."/>
            <person name="Hauser H."/>
            <person name="Holroyd S."/>
            <person name="Jagels K."/>
            <person name="Leather S."/>
            <person name="Moule S."/>
            <person name="Norberczak H."/>
            <person name="O'Neil S."/>
            <person name="Ormond D."/>
            <person name="Price C."/>
            <person name="Rabbinowitsch E."/>
            <person name="Rutter S."/>
            <person name="Sanders M."/>
            <person name="Saunders D."/>
            <person name="Seeger K."/>
            <person name="Sharp S."/>
            <person name="Simmonds M."/>
            <person name="Skelton J."/>
            <person name="Squares R."/>
            <person name="Squares S."/>
            <person name="Stevens K."/>
            <person name="Unwin L."/>
            <person name="Whitehead S."/>
            <person name="Barrell B.G."/>
            <person name="Maskell D.J."/>
        </authorList>
    </citation>
    <scope>NUCLEOTIDE SEQUENCE [LARGE SCALE GENOMIC DNA]</scope>
    <source>
        <strain>12822 / ATCC BAA-587 / NCTC 13253</strain>
    </source>
</reference>
<sequence>MSETLDQWRAGLTLGFAPGHAGRTVLRERAHYGPMLVQRALYPEGPQVCHVAILHPPSGIAGGDALEIRVDVAGGARAALTTPGATRWYKSNGRQASQDVHLRVAAGGRLDWLPLESIFFEEADALARNRIQLESGAAAIGWDLIQLGRVNQSGHWSQGRLHTATELYVDGRLLWVDQGLVGAQDDVRRQVSGLAGFPVHAALWSFGPRLDAEQNEELAGLMPWSDTLRGAATTMPYDATQSLCLVRCLGVHMEDVRAVMTDAWAYLRPRVLDTPAVVPRLWAT</sequence>